<protein>
    <recommendedName>
        <fullName evidence="1">Na(+)-translocating NADH-quinone reductase subunit F</fullName>
        <shortName evidence="1">Na(+)-NQR subunit F</shortName>
        <shortName evidence="1">Na(+)-translocating NQR subunit F</shortName>
        <ecNumber evidence="1">7.2.1.1</ecNumber>
    </recommendedName>
    <alternativeName>
        <fullName evidence="1">NQR complex subunit F</fullName>
    </alternativeName>
    <alternativeName>
        <fullName evidence="1">NQR-1 subunit F</fullName>
    </alternativeName>
</protein>
<accession>A6VW13</accession>
<evidence type="ECO:0000255" key="1">
    <source>
        <dbReference type="HAMAP-Rule" id="MF_00430"/>
    </source>
</evidence>
<gene>
    <name evidence="1" type="primary">nqrF</name>
    <name type="ordered locus">Mmwyl1_1716</name>
</gene>
<reference key="1">
    <citation type="submission" date="2007-06" db="EMBL/GenBank/DDBJ databases">
        <title>Complete sequence of Marinomonas sp. MWYL1.</title>
        <authorList>
            <consortium name="US DOE Joint Genome Institute"/>
            <person name="Copeland A."/>
            <person name="Lucas S."/>
            <person name="Lapidus A."/>
            <person name="Barry K."/>
            <person name="Glavina del Rio T."/>
            <person name="Dalin E."/>
            <person name="Tice H."/>
            <person name="Pitluck S."/>
            <person name="Kiss H."/>
            <person name="Brettin T."/>
            <person name="Bruce D."/>
            <person name="Detter J.C."/>
            <person name="Han C."/>
            <person name="Schmutz J."/>
            <person name="Larimer F."/>
            <person name="Land M."/>
            <person name="Hauser L."/>
            <person name="Kyrpides N."/>
            <person name="Kim E."/>
            <person name="Johnston A.W.B."/>
            <person name="Todd J.D."/>
            <person name="Rogers R."/>
            <person name="Wexler M."/>
            <person name="Bond P.L."/>
            <person name="Li Y."/>
            <person name="Richardson P."/>
        </authorList>
    </citation>
    <scope>NUCLEOTIDE SEQUENCE [LARGE SCALE GENOMIC DNA]</scope>
    <source>
        <strain>MWYL1</strain>
    </source>
</reference>
<organism>
    <name type="scientific">Marinomonas sp. (strain MWYL1)</name>
    <dbReference type="NCBI Taxonomy" id="400668"/>
    <lineage>
        <taxon>Bacteria</taxon>
        <taxon>Pseudomonadati</taxon>
        <taxon>Pseudomonadota</taxon>
        <taxon>Gammaproteobacteria</taxon>
        <taxon>Oceanospirillales</taxon>
        <taxon>Oceanospirillaceae</taxon>
        <taxon>Marinomonas</taxon>
    </lineage>
</organism>
<name>NQRF_MARMS</name>
<sequence>MVNLEIILGVVMFTAIVLALVAIILAARARLVSTGDVTIRINGEKEVTAPAGGKLLQTLANSGIFLSSACGGGGTCAQCKCKVTSGGGSMLSTEQSHFTRRDEKEGYRLSCQVSVKQDMDVEVPEEVFGVKAWECTVESNPNVATFIKELTLKLPEGENVDFRAGGYVQLEAPAHTVNYKDFDIEEEYRGDWDKFNLWKFVSKVDETVIRAYSMANYPEEKGIVKFNIRIASPPPGKDDLPPGQMSSYVFSLKPGDKIKVYGPFGEFFAKDTDAEMVFVGGGAGMAPMRSHIFDQLKRLNSKRKISFWYGARSVREAFYTEEYDKLQEENENFEWHLALSDPQPEDNWEGKTGFIHNVLYESYLKDHPAPEDCEFYMCGPPMMNASVIKMLEDLGVEKENILLDDFGG</sequence>
<dbReference type="EC" id="7.2.1.1" evidence="1"/>
<dbReference type="EMBL" id="CP000749">
    <property type="protein sequence ID" value="ABR70642.1"/>
    <property type="molecule type" value="Genomic_DNA"/>
</dbReference>
<dbReference type="SMR" id="A6VW13"/>
<dbReference type="STRING" id="400668.Mmwyl1_1716"/>
<dbReference type="KEGG" id="mmw:Mmwyl1_1716"/>
<dbReference type="eggNOG" id="COG2871">
    <property type="taxonomic scope" value="Bacteria"/>
</dbReference>
<dbReference type="HOGENOM" id="CLU_003827_7_2_6"/>
<dbReference type="OrthoDB" id="9806195at2"/>
<dbReference type="GO" id="GO:0005886">
    <property type="term" value="C:plasma membrane"/>
    <property type="evidence" value="ECO:0007669"/>
    <property type="project" value="UniProtKB-SubCell"/>
</dbReference>
<dbReference type="GO" id="GO:0051537">
    <property type="term" value="F:2 iron, 2 sulfur cluster binding"/>
    <property type="evidence" value="ECO:0007669"/>
    <property type="project" value="UniProtKB-KW"/>
</dbReference>
<dbReference type="GO" id="GO:0009055">
    <property type="term" value="F:electron transfer activity"/>
    <property type="evidence" value="ECO:0007669"/>
    <property type="project" value="UniProtKB-UniRule"/>
</dbReference>
<dbReference type="GO" id="GO:0046872">
    <property type="term" value="F:metal ion binding"/>
    <property type="evidence" value="ECO:0007669"/>
    <property type="project" value="UniProtKB-KW"/>
</dbReference>
<dbReference type="GO" id="GO:0016655">
    <property type="term" value="F:oxidoreductase activity, acting on NAD(P)H, quinone or similar compound as acceptor"/>
    <property type="evidence" value="ECO:0007669"/>
    <property type="project" value="InterPro"/>
</dbReference>
<dbReference type="GO" id="GO:0006814">
    <property type="term" value="P:sodium ion transport"/>
    <property type="evidence" value="ECO:0007669"/>
    <property type="project" value="UniProtKB-UniRule"/>
</dbReference>
<dbReference type="CDD" id="cd00207">
    <property type="entry name" value="fer2"/>
    <property type="match status" value="1"/>
</dbReference>
<dbReference type="CDD" id="cd06188">
    <property type="entry name" value="NADH_quinone_reductase"/>
    <property type="match status" value="1"/>
</dbReference>
<dbReference type="FunFam" id="3.40.50.80:FF:000014">
    <property type="entry name" value="Na(+)-translocating NADH-quinone reductase subunit F"/>
    <property type="match status" value="1"/>
</dbReference>
<dbReference type="Gene3D" id="3.10.20.30">
    <property type="match status" value="1"/>
</dbReference>
<dbReference type="Gene3D" id="3.40.50.80">
    <property type="entry name" value="Nucleotide-binding domain of ferredoxin-NADP reductase (FNR) module"/>
    <property type="match status" value="1"/>
</dbReference>
<dbReference type="Gene3D" id="2.40.30.10">
    <property type="entry name" value="Translation factors"/>
    <property type="match status" value="1"/>
</dbReference>
<dbReference type="HAMAP" id="MF_00430">
    <property type="entry name" value="NqrF"/>
    <property type="match status" value="1"/>
</dbReference>
<dbReference type="InterPro" id="IPR036010">
    <property type="entry name" value="2Fe-2S_ferredoxin-like_sf"/>
</dbReference>
<dbReference type="InterPro" id="IPR001041">
    <property type="entry name" value="2Fe-2S_ferredoxin-type"/>
</dbReference>
<dbReference type="InterPro" id="IPR012675">
    <property type="entry name" value="Beta-grasp_dom_sf"/>
</dbReference>
<dbReference type="InterPro" id="IPR008333">
    <property type="entry name" value="Cbr1-like_FAD-bd_dom"/>
</dbReference>
<dbReference type="InterPro" id="IPR017927">
    <property type="entry name" value="FAD-bd_FR_type"/>
</dbReference>
<dbReference type="InterPro" id="IPR039261">
    <property type="entry name" value="FNR_nucleotide-bd"/>
</dbReference>
<dbReference type="InterPro" id="IPR010205">
    <property type="entry name" value="NqrF"/>
</dbReference>
<dbReference type="InterPro" id="IPR001433">
    <property type="entry name" value="OxRdtase_FAD/NAD-bd"/>
</dbReference>
<dbReference type="InterPro" id="IPR017938">
    <property type="entry name" value="Riboflavin_synthase-like_b-brl"/>
</dbReference>
<dbReference type="NCBIfam" id="TIGR01941">
    <property type="entry name" value="nqrF"/>
    <property type="match status" value="1"/>
</dbReference>
<dbReference type="PANTHER" id="PTHR43644">
    <property type="entry name" value="NA(+)-TRANSLOCATING NADH-QUINONE REDUCTASE SUBUNIT"/>
    <property type="match status" value="1"/>
</dbReference>
<dbReference type="PANTHER" id="PTHR43644:SF1">
    <property type="entry name" value="NAD(P)H-FLAVIN REDUCTASE"/>
    <property type="match status" value="1"/>
</dbReference>
<dbReference type="Pfam" id="PF00970">
    <property type="entry name" value="FAD_binding_6"/>
    <property type="match status" value="1"/>
</dbReference>
<dbReference type="Pfam" id="PF00111">
    <property type="entry name" value="Fer2"/>
    <property type="match status" value="1"/>
</dbReference>
<dbReference type="Pfam" id="PF00175">
    <property type="entry name" value="NAD_binding_1"/>
    <property type="match status" value="1"/>
</dbReference>
<dbReference type="PIRSF" id="PIRSF000044">
    <property type="entry name" value="Cis_Diol_DH_RD"/>
    <property type="match status" value="1"/>
</dbReference>
<dbReference type="SUPFAM" id="SSF54292">
    <property type="entry name" value="2Fe-2S ferredoxin-like"/>
    <property type="match status" value="1"/>
</dbReference>
<dbReference type="SUPFAM" id="SSF52343">
    <property type="entry name" value="Ferredoxin reductase-like, C-terminal NADP-linked domain"/>
    <property type="match status" value="1"/>
</dbReference>
<dbReference type="SUPFAM" id="SSF63380">
    <property type="entry name" value="Riboflavin synthase domain-like"/>
    <property type="match status" value="1"/>
</dbReference>
<dbReference type="PROSITE" id="PS51085">
    <property type="entry name" value="2FE2S_FER_2"/>
    <property type="match status" value="1"/>
</dbReference>
<dbReference type="PROSITE" id="PS51384">
    <property type="entry name" value="FAD_FR"/>
    <property type="match status" value="1"/>
</dbReference>
<comment type="function">
    <text evidence="1">NQR complex catalyzes the reduction of ubiquinone-1 to ubiquinol by two successive reactions, coupled with the transport of Na(+) ions from the cytoplasm to the periplasm. The first step is catalyzed by NqrF, which accepts electrons from NADH and reduces ubiquinone-1 to ubisemiquinone by a one-electron transfer pathway.</text>
</comment>
<comment type="catalytic activity">
    <reaction evidence="1">
        <text>a ubiquinone + n Na(+)(in) + NADH + H(+) = a ubiquinol + n Na(+)(out) + NAD(+)</text>
        <dbReference type="Rhea" id="RHEA:47748"/>
        <dbReference type="Rhea" id="RHEA-COMP:9565"/>
        <dbReference type="Rhea" id="RHEA-COMP:9566"/>
        <dbReference type="ChEBI" id="CHEBI:15378"/>
        <dbReference type="ChEBI" id="CHEBI:16389"/>
        <dbReference type="ChEBI" id="CHEBI:17976"/>
        <dbReference type="ChEBI" id="CHEBI:29101"/>
        <dbReference type="ChEBI" id="CHEBI:57540"/>
        <dbReference type="ChEBI" id="CHEBI:57945"/>
        <dbReference type="EC" id="7.2.1.1"/>
    </reaction>
</comment>
<comment type="cofactor">
    <cofactor evidence="1">
        <name>[2Fe-2S] cluster</name>
        <dbReference type="ChEBI" id="CHEBI:190135"/>
    </cofactor>
    <text evidence="1">Binds 1 [2Fe-2S] cluster.</text>
</comment>
<comment type="cofactor">
    <cofactor evidence="1">
        <name>FAD</name>
        <dbReference type="ChEBI" id="CHEBI:57692"/>
    </cofactor>
</comment>
<comment type="subunit">
    <text evidence="1">Composed of six subunits; NqrA, NqrB, NqrC, NqrD, NqrE and NqrF.</text>
</comment>
<comment type="subcellular location">
    <subcellularLocation>
        <location evidence="1">Cell inner membrane</location>
        <topology evidence="1">Single-pass membrane protein</topology>
    </subcellularLocation>
</comment>
<comment type="similarity">
    <text evidence="1">Belongs to the NqrF family.</text>
</comment>
<proteinExistence type="inferred from homology"/>
<feature type="chain" id="PRO_1000080583" description="Na(+)-translocating NADH-quinone reductase subunit F">
    <location>
        <begin position="1"/>
        <end position="408"/>
    </location>
</feature>
<feature type="transmembrane region" description="Helical" evidence="1">
    <location>
        <begin position="6"/>
        <end position="26"/>
    </location>
</feature>
<feature type="domain" description="2Fe-2S ferredoxin-type" evidence="1">
    <location>
        <begin position="35"/>
        <end position="127"/>
    </location>
</feature>
<feature type="domain" description="FAD-binding FR-type" evidence="1">
    <location>
        <begin position="130"/>
        <end position="270"/>
    </location>
</feature>
<feature type="binding site" evidence="1">
    <location>
        <position position="70"/>
    </location>
    <ligand>
        <name>[2Fe-2S] cluster</name>
        <dbReference type="ChEBI" id="CHEBI:190135"/>
    </ligand>
</feature>
<feature type="binding site" evidence="1">
    <location>
        <position position="76"/>
    </location>
    <ligand>
        <name>[2Fe-2S] cluster</name>
        <dbReference type="ChEBI" id="CHEBI:190135"/>
    </ligand>
</feature>
<feature type="binding site" evidence="1">
    <location>
        <position position="79"/>
    </location>
    <ligand>
        <name>[2Fe-2S] cluster</name>
        <dbReference type="ChEBI" id="CHEBI:190135"/>
    </ligand>
</feature>
<feature type="binding site" evidence="1">
    <location>
        <position position="111"/>
    </location>
    <ligand>
        <name>[2Fe-2S] cluster</name>
        <dbReference type="ChEBI" id="CHEBI:190135"/>
    </ligand>
</feature>
<keyword id="KW-0001">2Fe-2S</keyword>
<keyword id="KW-0997">Cell inner membrane</keyword>
<keyword id="KW-1003">Cell membrane</keyword>
<keyword id="KW-0274">FAD</keyword>
<keyword id="KW-0285">Flavoprotein</keyword>
<keyword id="KW-0406">Ion transport</keyword>
<keyword id="KW-0408">Iron</keyword>
<keyword id="KW-0411">Iron-sulfur</keyword>
<keyword id="KW-0472">Membrane</keyword>
<keyword id="KW-0479">Metal-binding</keyword>
<keyword id="KW-0520">NAD</keyword>
<keyword id="KW-0915">Sodium</keyword>
<keyword id="KW-0739">Sodium transport</keyword>
<keyword id="KW-1278">Translocase</keyword>
<keyword id="KW-0812">Transmembrane</keyword>
<keyword id="KW-1133">Transmembrane helix</keyword>
<keyword id="KW-0813">Transport</keyword>
<keyword id="KW-0830">Ubiquinone</keyword>